<organism>
    <name type="scientific">Rippkaea orientalis (strain PCC 8801 / RF-1)</name>
    <name type="common">Cyanothece sp. (strain PCC 8801)</name>
    <dbReference type="NCBI Taxonomy" id="41431"/>
    <lineage>
        <taxon>Bacteria</taxon>
        <taxon>Bacillati</taxon>
        <taxon>Cyanobacteriota</taxon>
        <taxon>Cyanophyceae</taxon>
        <taxon>Oscillatoriophycideae</taxon>
        <taxon>Chroococcales</taxon>
        <taxon>Aphanothecaceae</taxon>
        <taxon>Rippkaea</taxon>
        <taxon>Rippkaea orientalis</taxon>
    </lineage>
</organism>
<comment type="function">
    <text evidence="1">Cell wall formation. Catalyzes the transfer of a GlcNAc subunit on undecaprenyl-pyrophosphoryl-MurNAc-pentapeptide (lipid intermediate I) to form undecaprenyl-pyrophosphoryl-MurNAc-(pentapeptide)GlcNAc (lipid intermediate II).</text>
</comment>
<comment type="catalytic activity">
    <reaction evidence="1">
        <text>di-trans,octa-cis-undecaprenyl diphospho-N-acetyl-alpha-D-muramoyl-L-alanyl-D-glutamyl-meso-2,6-diaminopimeloyl-D-alanyl-D-alanine + UDP-N-acetyl-alpha-D-glucosamine = di-trans,octa-cis-undecaprenyl diphospho-[N-acetyl-alpha-D-glucosaminyl-(1-&gt;4)]-N-acetyl-alpha-D-muramoyl-L-alanyl-D-glutamyl-meso-2,6-diaminopimeloyl-D-alanyl-D-alanine + UDP + H(+)</text>
        <dbReference type="Rhea" id="RHEA:31227"/>
        <dbReference type="ChEBI" id="CHEBI:15378"/>
        <dbReference type="ChEBI" id="CHEBI:57705"/>
        <dbReference type="ChEBI" id="CHEBI:58223"/>
        <dbReference type="ChEBI" id="CHEBI:61387"/>
        <dbReference type="ChEBI" id="CHEBI:61388"/>
        <dbReference type="EC" id="2.4.1.227"/>
    </reaction>
</comment>
<comment type="pathway">
    <text evidence="1">Cell wall biogenesis; peptidoglycan biosynthesis.</text>
</comment>
<comment type="subcellular location">
    <subcellularLocation>
        <location evidence="1">Cell inner membrane</location>
        <topology evidence="1">Peripheral membrane protein</topology>
        <orientation evidence="1">Cytoplasmic side</orientation>
    </subcellularLocation>
</comment>
<comment type="similarity">
    <text evidence="1">Belongs to the glycosyltransferase 28 family. MurG subfamily.</text>
</comment>
<protein>
    <recommendedName>
        <fullName evidence="1">UDP-N-acetylglucosamine--N-acetylmuramyl-(pentapeptide) pyrophosphoryl-undecaprenol N-acetylglucosamine transferase</fullName>
        <ecNumber evidence="1">2.4.1.227</ecNumber>
    </recommendedName>
    <alternativeName>
        <fullName evidence="1">Undecaprenyl-PP-MurNAc-pentapeptide-UDPGlcNAc GlcNAc transferase</fullName>
    </alternativeName>
</protein>
<gene>
    <name evidence="1" type="primary">murG</name>
    <name type="ordered locus">PCC8801_4117</name>
</gene>
<accession>B7K5Z6</accession>
<reference key="1">
    <citation type="journal article" date="2011" name="MBio">
        <title>Novel metabolic attributes of the genus Cyanothece, comprising a group of unicellular nitrogen-fixing Cyanobacteria.</title>
        <authorList>
            <person name="Bandyopadhyay A."/>
            <person name="Elvitigala T."/>
            <person name="Welsh E."/>
            <person name="Stockel J."/>
            <person name="Liberton M."/>
            <person name="Min H."/>
            <person name="Sherman L.A."/>
            <person name="Pakrasi H.B."/>
        </authorList>
    </citation>
    <scope>NUCLEOTIDE SEQUENCE [LARGE SCALE GENOMIC DNA]</scope>
    <source>
        <strain>PCC 8801 / RF-1</strain>
    </source>
</reference>
<feature type="chain" id="PRO_1000116472" description="UDP-N-acetylglucosamine--N-acetylmuramyl-(pentapeptide) pyrophosphoryl-undecaprenol N-acetylglucosamine transferase">
    <location>
        <begin position="1"/>
        <end position="351"/>
    </location>
</feature>
<feature type="binding site" evidence="1">
    <location>
        <begin position="11"/>
        <end position="13"/>
    </location>
    <ligand>
        <name>UDP-N-acetyl-alpha-D-glucosamine</name>
        <dbReference type="ChEBI" id="CHEBI:57705"/>
    </ligand>
</feature>
<feature type="binding site" evidence="1">
    <location>
        <position position="120"/>
    </location>
    <ligand>
        <name>UDP-N-acetyl-alpha-D-glucosamine</name>
        <dbReference type="ChEBI" id="CHEBI:57705"/>
    </ligand>
</feature>
<feature type="binding site" evidence="1">
    <location>
        <position position="161"/>
    </location>
    <ligand>
        <name>UDP-N-acetyl-alpha-D-glucosamine</name>
        <dbReference type="ChEBI" id="CHEBI:57705"/>
    </ligand>
</feature>
<feature type="binding site" evidence="1">
    <location>
        <position position="187"/>
    </location>
    <ligand>
        <name>UDP-N-acetyl-alpha-D-glucosamine</name>
        <dbReference type="ChEBI" id="CHEBI:57705"/>
    </ligand>
</feature>
<feature type="binding site" evidence="1">
    <location>
        <position position="281"/>
    </location>
    <ligand>
        <name>UDP-N-acetyl-alpha-D-glucosamine</name>
        <dbReference type="ChEBI" id="CHEBI:57705"/>
    </ligand>
</feature>
<sequence>MARLLIAASGTGGHLFPALALAEHLPDYQIEWLGVPDRLEQTLVGDRYPLHSIAVEGFQTRSVLKNLQILFKLIRGIFEVRHLIKTHHIDVVFTTGGYIAAPAILGARLAGIRAILHESNFIPGKVTRLLSRFCDRVALGFAGTAQYLPKAKTVWVSTPVRSPFYTPQPLDLPIPENVPLIAVIGGSQGAIAVNQLVRQCVPSWLAAGAYIVHLTGKNDPEAETFKHPHYFALPFYDNMAGLLQRANLAVSRAGAGTLTELAITGTPSILIPYPFAAEDHQAYNAQVFADAQAALLYRQAELTPEILENAVLNCLKHPETLESMAKQAQRLAVLDSAQQLATLVNGFVQVT</sequence>
<name>MURG_RIPO1</name>
<proteinExistence type="inferred from homology"/>
<evidence type="ECO:0000255" key="1">
    <source>
        <dbReference type="HAMAP-Rule" id="MF_00033"/>
    </source>
</evidence>
<keyword id="KW-0131">Cell cycle</keyword>
<keyword id="KW-0132">Cell division</keyword>
<keyword id="KW-0997">Cell inner membrane</keyword>
<keyword id="KW-1003">Cell membrane</keyword>
<keyword id="KW-0133">Cell shape</keyword>
<keyword id="KW-0961">Cell wall biogenesis/degradation</keyword>
<keyword id="KW-0328">Glycosyltransferase</keyword>
<keyword id="KW-0472">Membrane</keyword>
<keyword id="KW-0573">Peptidoglycan synthesis</keyword>
<keyword id="KW-1185">Reference proteome</keyword>
<keyword id="KW-0808">Transferase</keyword>
<dbReference type="EC" id="2.4.1.227" evidence="1"/>
<dbReference type="EMBL" id="CP001287">
    <property type="protein sequence ID" value="ACK68049.1"/>
    <property type="molecule type" value="Genomic_DNA"/>
</dbReference>
<dbReference type="RefSeq" id="WP_015957283.1">
    <property type="nucleotide sequence ID" value="NC_011726.1"/>
</dbReference>
<dbReference type="SMR" id="B7K5Z6"/>
<dbReference type="STRING" id="41431.PCC8801_4117"/>
<dbReference type="CAZy" id="GT28">
    <property type="family name" value="Glycosyltransferase Family 28"/>
</dbReference>
<dbReference type="KEGG" id="cyp:PCC8801_4117"/>
<dbReference type="eggNOG" id="COG0707">
    <property type="taxonomic scope" value="Bacteria"/>
</dbReference>
<dbReference type="HOGENOM" id="CLU_037404_0_1_3"/>
<dbReference type="OrthoDB" id="9808936at2"/>
<dbReference type="UniPathway" id="UPA00219"/>
<dbReference type="Proteomes" id="UP000008204">
    <property type="component" value="Chromosome"/>
</dbReference>
<dbReference type="GO" id="GO:0005886">
    <property type="term" value="C:plasma membrane"/>
    <property type="evidence" value="ECO:0007669"/>
    <property type="project" value="UniProtKB-SubCell"/>
</dbReference>
<dbReference type="GO" id="GO:0051991">
    <property type="term" value="F:UDP-N-acetyl-D-glucosamine:N-acetylmuramoyl-L-alanyl-D-glutamyl-meso-2,6-diaminopimelyl-D-alanyl-D-alanine-diphosphoundecaprenol 4-beta-N-acetylglucosaminlytransferase activity"/>
    <property type="evidence" value="ECO:0007669"/>
    <property type="project" value="RHEA"/>
</dbReference>
<dbReference type="GO" id="GO:0050511">
    <property type="term" value="F:undecaprenyldiphospho-muramoylpentapeptide beta-N-acetylglucosaminyltransferase activity"/>
    <property type="evidence" value="ECO:0007669"/>
    <property type="project" value="UniProtKB-UniRule"/>
</dbReference>
<dbReference type="GO" id="GO:0005975">
    <property type="term" value="P:carbohydrate metabolic process"/>
    <property type="evidence" value="ECO:0007669"/>
    <property type="project" value="InterPro"/>
</dbReference>
<dbReference type="GO" id="GO:0051301">
    <property type="term" value="P:cell division"/>
    <property type="evidence" value="ECO:0007669"/>
    <property type="project" value="UniProtKB-KW"/>
</dbReference>
<dbReference type="GO" id="GO:0071555">
    <property type="term" value="P:cell wall organization"/>
    <property type="evidence" value="ECO:0007669"/>
    <property type="project" value="UniProtKB-KW"/>
</dbReference>
<dbReference type="GO" id="GO:0030259">
    <property type="term" value="P:lipid glycosylation"/>
    <property type="evidence" value="ECO:0007669"/>
    <property type="project" value="UniProtKB-UniRule"/>
</dbReference>
<dbReference type="GO" id="GO:0009252">
    <property type="term" value="P:peptidoglycan biosynthetic process"/>
    <property type="evidence" value="ECO:0007669"/>
    <property type="project" value="UniProtKB-UniRule"/>
</dbReference>
<dbReference type="GO" id="GO:0008360">
    <property type="term" value="P:regulation of cell shape"/>
    <property type="evidence" value="ECO:0007669"/>
    <property type="project" value="UniProtKB-KW"/>
</dbReference>
<dbReference type="CDD" id="cd03785">
    <property type="entry name" value="GT28_MurG"/>
    <property type="match status" value="1"/>
</dbReference>
<dbReference type="Gene3D" id="3.40.50.2000">
    <property type="entry name" value="Glycogen Phosphorylase B"/>
    <property type="match status" value="2"/>
</dbReference>
<dbReference type="HAMAP" id="MF_00033">
    <property type="entry name" value="MurG"/>
    <property type="match status" value="1"/>
</dbReference>
<dbReference type="InterPro" id="IPR006009">
    <property type="entry name" value="GlcNAc_MurG"/>
</dbReference>
<dbReference type="InterPro" id="IPR007235">
    <property type="entry name" value="Glyco_trans_28_C"/>
</dbReference>
<dbReference type="InterPro" id="IPR004276">
    <property type="entry name" value="GlycoTrans_28_N"/>
</dbReference>
<dbReference type="NCBIfam" id="TIGR01133">
    <property type="entry name" value="murG"/>
    <property type="match status" value="1"/>
</dbReference>
<dbReference type="PANTHER" id="PTHR21015:SF22">
    <property type="entry name" value="GLYCOSYLTRANSFERASE"/>
    <property type="match status" value="1"/>
</dbReference>
<dbReference type="PANTHER" id="PTHR21015">
    <property type="entry name" value="UDP-N-ACETYLGLUCOSAMINE--N-ACETYLMURAMYL-(PENTAPEPTIDE) PYROPHOSPHORYL-UNDECAPRENOL N-ACETYLGLUCOSAMINE TRANSFERASE 1"/>
    <property type="match status" value="1"/>
</dbReference>
<dbReference type="Pfam" id="PF04101">
    <property type="entry name" value="Glyco_tran_28_C"/>
    <property type="match status" value="1"/>
</dbReference>
<dbReference type="Pfam" id="PF03033">
    <property type="entry name" value="Glyco_transf_28"/>
    <property type="match status" value="1"/>
</dbReference>
<dbReference type="SUPFAM" id="SSF53756">
    <property type="entry name" value="UDP-Glycosyltransferase/glycogen phosphorylase"/>
    <property type="match status" value="1"/>
</dbReference>